<sequence>MDPNCSCATGGSCTCANSCTCKACKCASCKKSCCSCCPVGCAKCAQGCICKGASDKCSCCA</sequence>
<comment type="function">
    <text>Metallothioneins have a high content of cysteine residues that bind various heavy metals; these proteins are transcriptionally regulated by both heavy metals and glucocorticoids. This isoform may play a role in regulating the transport, accumulation, and compartmentation of zinc in the hippocampus.</text>
</comment>
<comment type="domain">
    <text>Class I metallothioneins contain 2 metal-binding domains: four divalent ions are chelated within cluster A of the alpha domain and are coordinated via cysteinyl thiolate bridges to 11 cysteine ligands. Cluster B, the corresponding region within the beta domain, can ligate three divalent ions to 9 cysteines.</text>
</comment>
<comment type="similarity">
    <text evidence="3">Belongs to the metallothionein superfamily. Type 1 family.</text>
</comment>
<name>MT2H_BOVIN</name>
<proteinExistence type="evidence at protein level"/>
<keyword id="KW-0007">Acetylation</keyword>
<keyword id="KW-0903">Direct protein sequencing</keyword>
<keyword id="KW-0479">Metal-binding</keyword>
<keyword id="KW-0480">Metal-thiolate cluster</keyword>
<keyword id="KW-1185">Reference proteome</keyword>
<organism>
    <name type="scientific">Bos taurus</name>
    <name type="common">Bovine</name>
    <dbReference type="NCBI Taxonomy" id="9913"/>
    <lineage>
        <taxon>Eukaryota</taxon>
        <taxon>Metazoa</taxon>
        <taxon>Chordata</taxon>
        <taxon>Craniata</taxon>
        <taxon>Vertebrata</taxon>
        <taxon>Euteleostomi</taxon>
        <taxon>Mammalia</taxon>
        <taxon>Eutheria</taxon>
        <taxon>Laurasiatheria</taxon>
        <taxon>Artiodactyla</taxon>
        <taxon>Ruminantia</taxon>
        <taxon>Pecora</taxon>
        <taxon>Bovidae</taxon>
        <taxon>Bovinae</taxon>
        <taxon>Bos</taxon>
    </lineage>
</organism>
<evidence type="ECO:0000250" key="1">
    <source>
        <dbReference type="UniProtKB" id="P02795"/>
    </source>
</evidence>
<evidence type="ECO:0000269" key="2">
    <source>
    </source>
</evidence>
<evidence type="ECO:0000305" key="3"/>
<accession>P55943</accession>
<reference key="1">
    <citation type="journal article" date="1996" name="J. Neurochem.">
        <title>Amino acid composition, immunoreactivity, sequence analysis, and function of bovine hippocampal metallothionein isoforms.</title>
        <authorList>
            <person name="Ebadi M."/>
            <person name="Perini F."/>
            <person name="Mountjoy K."/>
            <person name="Garvey J.S."/>
        </authorList>
    </citation>
    <scope>PROTEIN SEQUENCE</scope>
    <scope>ACETYLATION AT MET-1</scope>
    <source>
        <tissue>Hippocampus</tissue>
    </source>
</reference>
<dbReference type="SMR" id="P55943"/>
<dbReference type="FunCoup" id="P55943">
    <property type="interactions" value="6"/>
</dbReference>
<dbReference type="iPTMnet" id="P55943"/>
<dbReference type="InParanoid" id="P55943"/>
<dbReference type="Proteomes" id="UP000009136">
    <property type="component" value="Unplaced"/>
</dbReference>
<dbReference type="GO" id="GO:0005737">
    <property type="term" value="C:cytoplasm"/>
    <property type="evidence" value="ECO:0000250"/>
    <property type="project" value="UniProtKB"/>
</dbReference>
<dbReference type="GO" id="GO:0005634">
    <property type="term" value="C:nucleus"/>
    <property type="evidence" value="ECO:0000250"/>
    <property type="project" value="UniProtKB"/>
</dbReference>
<dbReference type="GO" id="GO:0046872">
    <property type="term" value="F:metal ion binding"/>
    <property type="evidence" value="ECO:0000318"/>
    <property type="project" value="GO_Central"/>
</dbReference>
<dbReference type="GO" id="GO:0008270">
    <property type="term" value="F:zinc ion binding"/>
    <property type="evidence" value="ECO:0000250"/>
    <property type="project" value="UniProtKB"/>
</dbReference>
<dbReference type="GO" id="GO:0071276">
    <property type="term" value="P:cellular response to cadmium ion"/>
    <property type="evidence" value="ECO:0000318"/>
    <property type="project" value="GO_Central"/>
</dbReference>
<dbReference type="GO" id="GO:0071280">
    <property type="term" value="P:cellular response to copper ion"/>
    <property type="evidence" value="ECO:0000318"/>
    <property type="project" value="GO_Central"/>
</dbReference>
<dbReference type="GO" id="GO:0071294">
    <property type="term" value="P:cellular response to zinc ion"/>
    <property type="evidence" value="ECO:0000250"/>
    <property type="project" value="UniProtKB"/>
</dbReference>
<dbReference type="GO" id="GO:0010273">
    <property type="term" value="P:detoxification of copper ion"/>
    <property type="evidence" value="ECO:0000318"/>
    <property type="project" value="GO_Central"/>
</dbReference>
<dbReference type="GO" id="GO:0006882">
    <property type="term" value="P:intracellular zinc ion homeostasis"/>
    <property type="evidence" value="ECO:0000318"/>
    <property type="project" value="GO_Central"/>
</dbReference>
<dbReference type="GO" id="GO:0045926">
    <property type="term" value="P:negative regulation of growth"/>
    <property type="evidence" value="ECO:0000250"/>
    <property type="project" value="UniProtKB"/>
</dbReference>
<dbReference type="FunFam" id="4.10.10.10:FF:000001">
    <property type="entry name" value="Metallothionein"/>
    <property type="match status" value="1"/>
</dbReference>
<dbReference type="Gene3D" id="4.10.10.10">
    <property type="entry name" value="Metallothionein Isoform II"/>
    <property type="match status" value="1"/>
</dbReference>
<dbReference type="InterPro" id="IPR017854">
    <property type="entry name" value="Metalthion_dom_sf"/>
</dbReference>
<dbReference type="InterPro" id="IPR023587">
    <property type="entry name" value="Metalthion_dom_sf_vert"/>
</dbReference>
<dbReference type="InterPro" id="IPR000006">
    <property type="entry name" value="Metalthion_vert"/>
</dbReference>
<dbReference type="InterPro" id="IPR018064">
    <property type="entry name" value="Metalthion_vert_metal_BS"/>
</dbReference>
<dbReference type="PANTHER" id="PTHR23299">
    <property type="entry name" value="METALLOTHIONEIN"/>
    <property type="match status" value="1"/>
</dbReference>
<dbReference type="PANTHER" id="PTHR23299:SF38">
    <property type="entry name" value="METALLOTHIONEIN-2B"/>
    <property type="match status" value="1"/>
</dbReference>
<dbReference type="Pfam" id="PF00131">
    <property type="entry name" value="Metallothio"/>
    <property type="match status" value="1"/>
</dbReference>
<dbReference type="PRINTS" id="PR00860">
    <property type="entry name" value="MTVERTEBRATE"/>
</dbReference>
<dbReference type="SUPFAM" id="SSF57868">
    <property type="entry name" value="Metallothionein"/>
    <property type="match status" value="1"/>
</dbReference>
<dbReference type="PROSITE" id="PS00203">
    <property type="entry name" value="METALLOTHIONEIN_VRT"/>
    <property type="match status" value="1"/>
</dbReference>
<feature type="chain" id="PRO_0000197226" description="Metallothionein-II, hippocampal">
    <location>
        <begin position="1"/>
        <end position="61"/>
    </location>
</feature>
<feature type="region of interest" description="Beta">
    <location>
        <begin position="1"/>
        <end position="29"/>
    </location>
</feature>
<feature type="region of interest" description="Alpha">
    <location>
        <begin position="30"/>
        <end position="61"/>
    </location>
</feature>
<feature type="binding site" evidence="1">
    <location>
        <position position="5"/>
    </location>
    <ligand>
        <name>a divalent metal cation</name>
        <dbReference type="ChEBI" id="CHEBI:60240"/>
        <label>1</label>
        <note>in cluster B</note>
    </ligand>
</feature>
<feature type="binding site" evidence="1">
    <location>
        <position position="7"/>
    </location>
    <ligand>
        <name>a divalent metal cation</name>
        <dbReference type="ChEBI" id="CHEBI:60240"/>
        <label>1</label>
        <note>in cluster B</note>
    </ligand>
</feature>
<feature type="binding site" evidence="1">
    <location>
        <position position="7"/>
    </location>
    <ligand>
        <name>a divalent metal cation</name>
        <dbReference type="ChEBI" id="CHEBI:60240"/>
        <label>2</label>
        <note>in cluster B</note>
    </ligand>
</feature>
<feature type="binding site" evidence="1">
    <location>
        <position position="13"/>
    </location>
    <ligand>
        <name>a divalent metal cation</name>
        <dbReference type="ChEBI" id="CHEBI:60240"/>
        <label>2</label>
        <note>in cluster B</note>
    </ligand>
</feature>
<feature type="binding site" evidence="1">
    <location>
        <position position="15"/>
    </location>
    <ligand>
        <name>a divalent metal cation</name>
        <dbReference type="ChEBI" id="CHEBI:60240"/>
        <label>2</label>
        <note>in cluster B</note>
    </ligand>
</feature>
<feature type="binding site" evidence="1">
    <location>
        <position position="15"/>
    </location>
    <ligand>
        <name>a divalent metal cation</name>
        <dbReference type="ChEBI" id="CHEBI:60240"/>
        <label>3</label>
        <note>in cluster B</note>
    </ligand>
</feature>
<feature type="binding site" evidence="1">
    <location>
        <position position="19"/>
    </location>
    <ligand>
        <name>a divalent metal cation</name>
        <dbReference type="ChEBI" id="CHEBI:60240"/>
        <label>3</label>
        <note>in cluster B</note>
    </ligand>
</feature>
<feature type="binding site" evidence="1">
    <location>
        <position position="21"/>
    </location>
    <ligand>
        <name>a divalent metal cation</name>
        <dbReference type="ChEBI" id="CHEBI:60240"/>
        <label>1</label>
        <note>in cluster B</note>
    </ligand>
</feature>
<feature type="binding site" evidence="1">
    <location>
        <position position="24"/>
    </location>
    <ligand>
        <name>a divalent metal cation</name>
        <dbReference type="ChEBI" id="CHEBI:60240"/>
        <label>1</label>
        <note>in cluster B</note>
    </ligand>
</feature>
<feature type="binding site" evidence="1">
    <location>
        <position position="24"/>
    </location>
    <ligand>
        <name>a divalent metal cation</name>
        <dbReference type="ChEBI" id="CHEBI:60240"/>
        <label>3</label>
        <note>in cluster B</note>
    </ligand>
</feature>
<feature type="binding site" evidence="1">
    <location>
        <position position="26"/>
    </location>
    <ligand>
        <name>a divalent metal cation</name>
        <dbReference type="ChEBI" id="CHEBI:60240"/>
        <label>2</label>
        <note>in cluster B</note>
    </ligand>
</feature>
<feature type="binding site" evidence="1">
    <location>
        <position position="29"/>
    </location>
    <ligand>
        <name>a divalent metal cation</name>
        <dbReference type="ChEBI" id="CHEBI:60240"/>
        <label>3</label>
        <note>in cluster B</note>
    </ligand>
</feature>
<feature type="binding site" evidence="1">
    <location>
        <position position="33"/>
    </location>
    <ligand>
        <name>a divalent metal cation</name>
        <dbReference type="ChEBI" id="CHEBI:60240"/>
        <label>4</label>
        <note>in cluster A</note>
    </ligand>
</feature>
<feature type="binding site" evidence="1">
    <location>
        <position position="34"/>
    </location>
    <ligand>
        <name>a divalent metal cation</name>
        <dbReference type="ChEBI" id="CHEBI:60240"/>
        <label>4</label>
        <note>in cluster A</note>
    </ligand>
</feature>
<feature type="binding site" evidence="1">
    <location>
        <position position="34"/>
    </location>
    <ligand>
        <name>a divalent metal cation</name>
        <dbReference type="ChEBI" id="CHEBI:60240"/>
        <label>5</label>
        <note>in cluster A</note>
    </ligand>
</feature>
<feature type="binding site" evidence="1">
    <location>
        <position position="36"/>
    </location>
    <ligand>
        <name>a divalent metal cation</name>
        <dbReference type="ChEBI" id="CHEBI:60240"/>
        <label>5</label>
        <note>in cluster A</note>
    </ligand>
</feature>
<feature type="binding site" evidence="1">
    <location>
        <position position="37"/>
    </location>
    <ligand>
        <name>a divalent metal cation</name>
        <dbReference type="ChEBI" id="CHEBI:60240"/>
        <label>5</label>
        <note>in cluster A</note>
    </ligand>
</feature>
<feature type="binding site" evidence="1">
    <location>
        <position position="37"/>
    </location>
    <ligand>
        <name>a divalent metal cation</name>
        <dbReference type="ChEBI" id="CHEBI:60240"/>
        <label>6</label>
        <note>in cluster A</note>
    </ligand>
</feature>
<feature type="binding site" evidence="1">
    <location>
        <position position="41"/>
    </location>
    <ligand>
        <name>a divalent metal cation</name>
        <dbReference type="ChEBI" id="CHEBI:60240"/>
        <label>6</label>
        <note>in cluster A</note>
    </ligand>
</feature>
<feature type="binding site" evidence="1">
    <location>
        <position position="44"/>
    </location>
    <ligand>
        <name>a divalent metal cation</name>
        <dbReference type="ChEBI" id="CHEBI:60240"/>
        <label>4</label>
        <note>in cluster A</note>
    </ligand>
</feature>
<feature type="binding site" evidence="1">
    <location>
        <position position="44"/>
    </location>
    <ligand>
        <name>a divalent metal cation</name>
        <dbReference type="ChEBI" id="CHEBI:60240"/>
        <label>6</label>
        <note>in cluster A</note>
    </ligand>
</feature>
<feature type="binding site" evidence="1">
    <location>
        <position position="48"/>
    </location>
    <ligand>
        <name>a divalent metal cation</name>
        <dbReference type="ChEBI" id="CHEBI:60240"/>
        <label>4</label>
        <note>in cluster A</note>
    </ligand>
</feature>
<feature type="binding site" evidence="1">
    <location>
        <position position="50"/>
    </location>
    <ligand>
        <name>a divalent metal cation</name>
        <dbReference type="ChEBI" id="CHEBI:60240"/>
        <label>5</label>
        <note>in cluster A</note>
    </ligand>
</feature>
<feature type="binding site" evidence="1">
    <location>
        <position position="50"/>
    </location>
    <ligand>
        <name>a divalent metal cation</name>
        <dbReference type="ChEBI" id="CHEBI:60240"/>
        <label>7</label>
        <note>in cluster A</note>
    </ligand>
</feature>
<feature type="binding site" evidence="1">
    <location>
        <position position="57"/>
    </location>
    <ligand>
        <name>a divalent metal cation</name>
        <dbReference type="ChEBI" id="CHEBI:60240"/>
        <label>7</label>
        <note>in cluster A</note>
    </ligand>
</feature>
<feature type="binding site" evidence="1">
    <location>
        <position position="59"/>
    </location>
    <ligand>
        <name>a divalent metal cation</name>
        <dbReference type="ChEBI" id="CHEBI:60240"/>
        <label>7</label>
        <note>in cluster A</note>
    </ligand>
</feature>
<feature type="binding site" evidence="1">
    <location>
        <position position="60"/>
    </location>
    <ligand>
        <name>a divalent metal cation</name>
        <dbReference type="ChEBI" id="CHEBI:60240"/>
        <label>6</label>
        <note>in cluster A</note>
    </ligand>
</feature>
<feature type="binding site" evidence="1">
    <location>
        <position position="60"/>
    </location>
    <ligand>
        <name>a divalent metal cation</name>
        <dbReference type="ChEBI" id="CHEBI:60240"/>
        <label>7</label>
        <note>in cluster A</note>
    </ligand>
</feature>
<feature type="modified residue" description="N-acetylmethionine" evidence="2">
    <location>
        <position position="1"/>
    </location>
</feature>
<protein>
    <recommendedName>
        <fullName>Metallothionein-II, hippocampal</fullName>
    </recommendedName>
    <alternativeName>
        <fullName>MT-2</fullName>
    </alternativeName>
</protein>